<sequence length="143" mass="16409">MSRHYEVVFLVHPDQSEQVPAMIERYKSLIEGGNGTIHRLEDWGRRQLAYPIQNLVKAHYVLLNIEVDQAVLSELVESFRFNDAVLRHLVVKRDGPDTEQSLIMKSKDEKGDKHERSERRRRDDEEGDVPAATDTDGDNAEAA</sequence>
<proteinExistence type="inferred from homology"/>
<dbReference type="EMBL" id="AE013598">
    <property type="protein sequence ID" value="AAW75670.1"/>
    <property type="molecule type" value="Genomic_DNA"/>
</dbReference>
<dbReference type="SMR" id="Q5H051"/>
<dbReference type="STRING" id="291331.XOO2416"/>
<dbReference type="KEGG" id="xoo:XOO2416"/>
<dbReference type="HOGENOM" id="CLU_113441_6_0_6"/>
<dbReference type="Proteomes" id="UP000006735">
    <property type="component" value="Chromosome"/>
</dbReference>
<dbReference type="GO" id="GO:0022627">
    <property type="term" value="C:cytosolic small ribosomal subunit"/>
    <property type="evidence" value="ECO:0007669"/>
    <property type="project" value="TreeGrafter"/>
</dbReference>
<dbReference type="GO" id="GO:0070181">
    <property type="term" value="F:small ribosomal subunit rRNA binding"/>
    <property type="evidence" value="ECO:0007669"/>
    <property type="project" value="TreeGrafter"/>
</dbReference>
<dbReference type="GO" id="GO:0003735">
    <property type="term" value="F:structural constituent of ribosome"/>
    <property type="evidence" value="ECO:0007669"/>
    <property type="project" value="InterPro"/>
</dbReference>
<dbReference type="GO" id="GO:0006412">
    <property type="term" value="P:translation"/>
    <property type="evidence" value="ECO:0007669"/>
    <property type="project" value="UniProtKB-UniRule"/>
</dbReference>
<dbReference type="CDD" id="cd00473">
    <property type="entry name" value="bS6"/>
    <property type="match status" value="1"/>
</dbReference>
<dbReference type="FunFam" id="3.30.70.60:FF:000003">
    <property type="entry name" value="30S ribosomal protein S6"/>
    <property type="match status" value="1"/>
</dbReference>
<dbReference type="Gene3D" id="3.30.70.60">
    <property type="match status" value="1"/>
</dbReference>
<dbReference type="HAMAP" id="MF_00360">
    <property type="entry name" value="Ribosomal_bS6"/>
    <property type="match status" value="1"/>
</dbReference>
<dbReference type="InterPro" id="IPR000529">
    <property type="entry name" value="Ribosomal_bS6"/>
</dbReference>
<dbReference type="InterPro" id="IPR035980">
    <property type="entry name" value="Ribosomal_bS6_sf"/>
</dbReference>
<dbReference type="InterPro" id="IPR020814">
    <property type="entry name" value="Ribosomal_S6_plastid/chlpt"/>
</dbReference>
<dbReference type="InterPro" id="IPR014717">
    <property type="entry name" value="Transl_elong_EF1B/ribsomal_bS6"/>
</dbReference>
<dbReference type="NCBIfam" id="TIGR00166">
    <property type="entry name" value="S6"/>
    <property type="match status" value="1"/>
</dbReference>
<dbReference type="PANTHER" id="PTHR21011">
    <property type="entry name" value="MITOCHONDRIAL 28S RIBOSOMAL PROTEIN S6"/>
    <property type="match status" value="1"/>
</dbReference>
<dbReference type="PANTHER" id="PTHR21011:SF1">
    <property type="entry name" value="SMALL RIBOSOMAL SUBUNIT PROTEIN BS6M"/>
    <property type="match status" value="1"/>
</dbReference>
<dbReference type="Pfam" id="PF01250">
    <property type="entry name" value="Ribosomal_S6"/>
    <property type="match status" value="1"/>
</dbReference>
<dbReference type="SUPFAM" id="SSF54995">
    <property type="entry name" value="Ribosomal protein S6"/>
    <property type="match status" value="1"/>
</dbReference>
<name>RS6_XANOR</name>
<reference key="1">
    <citation type="journal article" date="2005" name="Nucleic Acids Res.">
        <title>The genome sequence of Xanthomonas oryzae pathovar oryzae KACC10331, the bacterial blight pathogen of rice.</title>
        <authorList>
            <person name="Lee B.-M."/>
            <person name="Park Y.-J."/>
            <person name="Park D.-S."/>
            <person name="Kang H.-W."/>
            <person name="Kim J.-G."/>
            <person name="Song E.-S."/>
            <person name="Park I.-C."/>
            <person name="Yoon U.-H."/>
            <person name="Hahn J.-H."/>
            <person name="Koo B.-S."/>
            <person name="Lee G.-B."/>
            <person name="Kim H."/>
            <person name="Park H.-S."/>
            <person name="Yoon K.-O."/>
            <person name="Kim J.-H."/>
            <person name="Jung C.-H."/>
            <person name="Koh N.-H."/>
            <person name="Seo J.-S."/>
            <person name="Go S.-J."/>
        </authorList>
    </citation>
    <scope>NUCLEOTIDE SEQUENCE [LARGE SCALE GENOMIC DNA]</scope>
    <source>
        <strain>KACC10331 / KXO85</strain>
    </source>
</reference>
<comment type="function">
    <text evidence="1">Binds together with bS18 to 16S ribosomal RNA.</text>
</comment>
<comment type="similarity">
    <text evidence="1">Belongs to the bacterial ribosomal protein bS6 family.</text>
</comment>
<feature type="chain" id="PRO_0000229593" description="Small ribosomal subunit protein bS6">
    <location>
        <begin position="1"/>
        <end position="143"/>
    </location>
</feature>
<feature type="region of interest" description="Disordered" evidence="2">
    <location>
        <begin position="97"/>
        <end position="143"/>
    </location>
</feature>
<feature type="compositionally biased region" description="Basic and acidic residues" evidence="2">
    <location>
        <begin position="105"/>
        <end position="124"/>
    </location>
</feature>
<organism>
    <name type="scientific">Xanthomonas oryzae pv. oryzae (strain KACC10331 / KXO85)</name>
    <dbReference type="NCBI Taxonomy" id="291331"/>
    <lineage>
        <taxon>Bacteria</taxon>
        <taxon>Pseudomonadati</taxon>
        <taxon>Pseudomonadota</taxon>
        <taxon>Gammaproteobacteria</taxon>
        <taxon>Lysobacterales</taxon>
        <taxon>Lysobacteraceae</taxon>
        <taxon>Xanthomonas</taxon>
    </lineage>
</organism>
<gene>
    <name evidence="1" type="primary">rpsF</name>
    <name type="ordered locus">XOO2416</name>
</gene>
<evidence type="ECO:0000255" key="1">
    <source>
        <dbReference type="HAMAP-Rule" id="MF_00360"/>
    </source>
</evidence>
<evidence type="ECO:0000256" key="2">
    <source>
        <dbReference type="SAM" id="MobiDB-lite"/>
    </source>
</evidence>
<evidence type="ECO:0000305" key="3"/>
<accession>Q5H051</accession>
<protein>
    <recommendedName>
        <fullName evidence="1">Small ribosomal subunit protein bS6</fullName>
    </recommendedName>
    <alternativeName>
        <fullName evidence="3">30S ribosomal protein S6</fullName>
    </alternativeName>
</protein>
<keyword id="KW-1185">Reference proteome</keyword>
<keyword id="KW-0687">Ribonucleoprotein</keyword>
<keyword id="KW-0689">Ribosomal protein</keyword>
<keyword id="KW-0694">RNA-binding</keyword>
<keyword id="KW-0699">rRNA-binding</keyword>